<protein>
    <recommendedName>
        <fullName>Tryptophan synthase beta chain</fullName>
        <ecNumber>4.2.1.20</ecNumber>
    </recommendedName>
</protein>
<keyword id="KW-0028">Amino-acid biosynthesis</keyword>
<keyword id="KW-0057">Aromatic amino acid biosynthesis</keyword>
<keyword id="KW-0456">Lyase</keyword>
<keyword id="KW-0663">Pyridoxal phosphate</keyword>
<keyword id="KW-1185">Reference proteome</keyword>
<keyword id="KW-0822">Tryptophan biosynthesis</keyword>
<gene>
    <name type="primary">trpB</name>
    <name type="ordered locus">SCO2037</name>
    <name type="ORF">SC4G6.06c</name>
</gene>
<comment type="function">
    <text evidence="1">The beta subunit is responsible for the synthesis of L-tryptophan from indole and L-serine.</text>
</comment>
<comment type="catalytic activity">
    <reaction>
        <text>(1S,2R)-1-C-(indol-3-yl)glycerol 3-phosphate + L-serine = D-glyceraldehyde 3-phosphate + L-tryptophan + H2O</text>
        <dbReference type="Rhea" id="RHEA:10532"/>
        <dbReference type="ChEBI" id="CHEBI:15377"/>
        <dbReference type="ChEBI" id="CHEBI:33384"/>
        <dbReference type="ChEBI" id="CHEBI:57912"/>
        <dbReference type="ChEBI" id="CHEBI:58866"/>
        <dbReference type="ChEBI" id="CHEBI:59776"/>
        <dbReference type="EC" id="4.2.1.20"/>
    </reaction>
</comment>
<comment type="cofactor">
    <cofactor evidence="1">
        <name>pyridoxal 5'-phosphate</name>
        <dbReference type="ChEBI" id="CHEBI:597326"/>
    </cofactor>
</comment>
<comment type="pathway">
    <text>Amino-acid biosynthesis; L-tryptophan biosynthesis; L-tryptophan from chorismate: step 5/5.</text>
</comment>
<comment type="subunit">
    <text evidence="1">Tetramer of two alpha and two beta chains.</text>
</comment>
<comment type="similarity">
    <text evidence="2">Belongs to the TrpB family.</text>
</comment>
<reference key="1">
    <citation type="journal article" date="1999" name="Mol. Microbiol.">
        <title>The expression of the trpD, trpC and trpBA genes of Streptomyces coelicolor A3(2) is regulated by growth rate and growth phase but not by feedback repression.</title>
        <authorList>
            <person name="Hu D.S.-J."/>
            <person name="Hood D.W."/>
            <person name="Heidstra R."/>
            <person name="Hodgson D.A."/>
        </authorList>
    </citation>
    <scope>NUCLEOTIDE SEQUENCE [GENOMIC DNA]</scope>
    <source>
        <strain>A3(2) / NRRL B-16638</strain>
    </source>
</reference>
<reference key="2">
    <citation type="journal article" date="2002" name="Nature">
        <title>Complete genome sequence of the model actinomycete Streptomyces coelicolor A3(2).</title>
        <authorList>
            <person name="Bentley S.D."/>
            <person name="Chater K.F."/>
            <person name="Cerdeno-Tarraga A.-M."/>
            <person name="Challis G.L."/>
            <person name="Thomson N.R."/>
            <person name="James K.D."/>
            <person name="Harris D.E."/>
            <person name="Quail M.A."/>
            <person name="Kieser H."/>
            <person name="Harper D."/>
            <person name="Bateman A."/>
            <person name="Brown S."/>
            <person name="Chandra G."/>
            <person name="Chen C.W."/>
            <person name="Collins M."/>
            <person name="Cronin A."/>
            <person name="Fraser A."/>
            <person name="Goble A."/>
            <person name="Hidalgo J."/>
            <person name="Hornsby T."/>
            <person name="Howarth S."/>
            <person name="Huang C.-H."/>
            <person name="Kieser T."/>
            <person name="Larke L."/>
            <person name="Murphy L.D."/>
            <person name="Oliver K."/>
            <person name="O'Neil S."/>
            <person name="Rabbinowitsch E."/>
            <person name="Rajandream M.A."/>
            <person name="Rutherford K.M."/>
            <person name="Rutter S."/>
            <person name="Seeger K."/>
            <person name="Saunders D."/>
            <person name="Sharp S."/>
            <person name="Squares R."/>
            <person name="Squares S."/>
            <person name="Taylor K."/>
            <person name="Warren T."/>
            <person name="Wietzorrek A."/>
            <person name="Woodward J.R."/>
            <person name="Barrell B.G."/>
            <person name="Parkhill J."/>
            <person name="Hopwood D.A."/>
        </authorList>
    </citation>
    <scope>NUCLEOTIDE SEQUENCE [LARGE SCALE GENOMIC DNA]</scope>
    <source>
        <strain>ATCC BAA-471 / A3(2) / M145</strain>
    </source>
</reference>
<reference key="3">
    <citation type="journal article" date="1997" name="Appl. Environ. Microbiol.">
        <title>Molecular detection of streptomycin-producing streptomycetes in Brazilian soils.</title>
        <authorList>
            <person name="Huddleston A.S."/>
            <person name="Cresswell N."/>
            <person name="Neves M.C."/>
            <person name="Beringer J.E."/>
            <person name="Baumberg S."/>
            <person name="Thomas D.I."/>
            <person name="Wellington E.M."/>
        </authorList>
    </citation>
    <scope>NUCLEOTIDE SEQUENCE [GENOMIC DNA] OF 320-427</scope>
    <source>
        <strain>A3(2) / NRRL B-16638</strain>
    </source>
</reference>
<accession>O05625</accession>
<name>TRPB_STRCO</name>
<organism>
    <name type="scientific">Streptomyces coelicolor (strain ATCC BAA-471 / A3(2) / M145)</name>
    <dbReference type="NCBI Taxonomy" id="100226"/>
    <lineage>
        <taxon>Bacteria</taxon>
        <taxon>Bacillati</taxon>
        <taxon>Actinomycetota</taxon>
        <taxon>Actinomycetes</taxon>
        <taxon>Kitasatosporales</taxon>
        <taxon>Streptomycetaceae</taxon>
        <taxon>Streptomyces</taxon>
        <taxon>Streptomyces albidoflavus group</taxon>
    </lineage>
</organism>
<proteinExistence type="inferred from homology"/>
<evidence type="ECO:0000250" key="1"/>
<evidence type="ECO:0000305" key="2"/>
<sequence length="427" mass="45384">MPSNFFIPDPEGQVPSAEGYFGAFGGKFIPEALVAAVDEVAVEYDKAKSDPEFARELDDLLVHYTGRPSALTEVPRFAAEAGGARIFLKREDLNHTGSHKINNVLGQALLTKRMGKTRVIAETGAGQHGVATATACALFGLDCTIYMGEIDTRRQALNVARMRMLGAEVIAVKSGSRTLKDAINEAFRDWVANVDRTHYLFGTVAGPHPFPAMVRDFHRVIGVEARRQLLEQAGRLPDAAIACVGGGSNAIGLFHAFIPDADVRLIGCEPAGHGVETGEHAATLTAGEPGILHGSRSYVLQDDEGQITEPYSISAGLDYPGIGPEHAYLKDSGRGEYRAVTDDAAMQALRLLSRTEGIIPAIESAHALAGALEVGRELGRDGLLVVNLSGRGDKDMDTAARYFGLYDTDAEVAADGTGAAEIEGDAK</sequence>
<feature type="chain" id="PRO_0000099006" description="Tryptophan synthase beta chain">
    <location>
        <begin position="1"/>
        <end position="427"/>
    </location>
</feature>
<feature type="modified residue" description="N6-(pyridoxal phosphate)lysine" evidence="1">
    <location>
        <position position="100"/>
    </location>
</feature>
<dbReference type="EC" id="4.2.1.20"/>
<dbReference type="EMBL" id="AF054585">
    <property type="protein sequence ID" value="AAC63502.1"/>
    <property type="molecule type" value="Genomic_DNA"/>
</dbReference>
<dbReference type="EMBL" id="AL939111">
    <property type="protein sequence ID" value="CAB51429.1"/>
    <property type="molecule type" value="Genomic_DNA"/>
</dbReference>
<dbReference type="EMBL" id="U72185">
    <property type="protein sequence ID" value="AAB52397.1"/>
    <property type="molecule type" value="Genomic_DNA"/>
</dbReference>
<dbReference type="PIR" id="T35066">
    <property type="entry name" value="T35066"/>
</dbReference>
<dbReference type="RefSeq" id="NP_626297.1">
    <property type="nucleotide sequence ID" value="NC_003888.3"/>
</dbReference>
<dbReference type="RefSeq" id="WP_003976779.1">
    <property type="nucleotide sequence ID" value="NZ_VNID01000001.1"/>
</dbReference>
<dbReference type="SMR" id="O05625"/>
<dbReference type="FunCoup" id="O05625">
    <property type="interactions" value="355"/>
</dbReference>
<dbReference type="STRING" id="100226.gene:17759635"/>
<dbReference type="PaxDb" id="100226-SCO2037"/>
<dbReference type="GeneID" id="91386970"/>
<dbReference type="KEGG" id="sco:SCO2037"/>
<dbReference type="PATRIC" id="fig|100226.15.peg.2068"/>
<dbReference type="eggNOG" id="COG0133">
    <property type="taxonomic scope" value="Bacteria"/>
</dbReference>
<dbReference type="HOGENOM" id="CLU_016734_3_1_11"/>
<dbReference type="InParanoid" id="O05625"/>
<dbReference type="OrthoDB" id="9766131at2"/>
<dbReference type="PhylomeDB" id="O05625"/>
<dbReference type="UniPathway" id="UPA00035">
    <property type="reaction ID" value="UER00044"/>
</dbReference>
<dbReference type="Proteomes" id="UP000001973">
    <property type="component" value="Chromosome"/>
</dbReference>
<dbReference type="GO" id="GO:0005737">
    <property type="term" value="C:cytoplasm"/>
    <property type="evidence" value="ECO:0000318"/>
    <property type="project" value="GO_Central"/>
</dbReference>
<dbReference type="GO" id="GO:0004834">
    <property type="term" value="F:tryptophan synthase activity"/>
    <property type="evidence" value="ECO:0007669"/>
    <property type="project" value="UniProtKB-UniRule"/>
</dbReference>
<dbReference type="GO" id="GO:0000162">
    <property type="term" value="P:L-tryptophan biosynthetic process"/>
    <property type="evidence" value="ECO:0000318"/>
    <property type="project" value="GO_Central"/>
</dbReference>
<dbReference type="CDD" id="cd06446">
    <property type="entry name" value="Trp-synth_B"/>
    <property type="match status" value="1"/>
</dbReference>
<dbReference type="FunFam" id="3.40.50.1100:FF:000001">
    <property type="entry name" value="Tryptophan synthase beta chain"/>
    <property type="match status" value="1"/>
</dbReference>
<dbReference type="FunFam" id="3.40.50.1100:FF:000004">
    <property type="entry name" value="Tryptophan synthase beta chain"/>
    <property type="match status" value="1"/>
</dbReference>
<dbReference type="Gene3D" id="3.40.50.1100">
    <property type="match status" value="2"/>
</dbReference>
<dbReference type="HAMAP" id="MF_00133">
    <property type="entry name" value="Trp_synth_beta"/>
    <property type="match status" value="1"/>
</dbReference>
<dbReference type="InterPro" id="IPR006653">
    <property type="entry name" value="Trp_synth_b_CS"/>
</dbReference>
<dbReference type="InterPro" id="IPR006654">
    <property type="entry name" value="Trp_synth_beta"/>
</dbReference>
<dbReference type="InterPro" id="IPR023026">
    <property type="entry name" value="Trp_synth_beta/beta-like"/>
</dbReference>
<dbReference type="InterPro" id="IPR001926">
    <property type="entry name" value="TrpB-like_PALP"/>
</dbReference>
<dbReference type="InterPro" id="IPR036052">
    <property type="entry name" value="TrpB-like_PALP_sf"/>
</dbReference>
<dbReference type="NCBIfam" id="TIGR00263">
    <property type="entry name" value="trpB"/>
    <property type="match status" value="1"/>
</dbReference>
<dbReference type="PANTHER" id="PTHR48077:SF3">
    <property type="entry name" value="TRYPTOPHAN SYNTHASE"/>
    <property type="match status" value="1"/>
</dbReference>
<dbReference type="PANTHER" id="PTHR48077">
    <property type="entry name" value="TRYPTOPHAN SYNTHASE-RELATED"/>
    <property type="match status" value="1"/>
</dbReference>
<dbReference type="Pfam" id="PF00291">
    <property type="entry name" value="PALP"/>
    <property type="match status" value="1"/>
</dbReference>
<dbReference type="PIRSF" id="PIRSF001413">
    <property type="entry name" value="Trp_syn_beta"/>
    <property type="match status" value="1"/>
</dbReference>
<dbReference type="SUPFAM" id="SSF53686">
    <property type="entry name" value="Tryptophan synthase beta subunit-like PLP-dependent enzymes"/>
    <property type="match status" value="1"/>
</dbReference>
<dbReference type="PROSITE" id="PS00168">
    <property type="entry name" value="TRP_SYNTHASE_BETA"/>
    <property type="match status" value="1"/>
</dbReference>